<feature type="chain" id="PRO_0000190569" description="4-hydroxy-3-methylbut-2-en-1-yl diphosphate synthase (flavodoxin)">
    <location>
        <begin position="1"/>
        <end position="429"/>
    </location>
</feature>
<feature type="binding site" evidence="1">
    <location>
        <position position="317"/>
    </location>
    <ligand>
        <name>[4Fe-4S] cluster</name>
        <dbReference type="ChEBI" id="CHEBI:49883"/>
    </ligand>
</feature>
<feature type="binding site" evidence="1">
    <location>
        <position position="320"/>
    </location>
    <ligand>
        <name>[4Fe-4S] cluster</name>
        <dbReference type="ChEBI" id="CHEBI:49883"/>
    </ligand>
</feature>
<feature type="binding site" evidence="1">
    <location>
        <position position="363"/>
    </location>
    <ligand>
        <name>[4Fe-4S] cluster</name>
        <dbReference type="ChEBI" id="CHEBI:49883"/>
    </ligand>
</feature>
<feature type="binding site" evidence="1">
    <location>
        <position position="370"/>
    </location>
    <ligand>
        <name>[4Fe-4S] cluster</name>
        <dbReference type="ChEBI" id="CHEBI:49883"/>
    </ligand>
</feature>
<proteinExistence type="inferred from homology"/>
<name>ISPG_DEIRA</name>
<gene>
    <name evidence="1" type="primary">ispG</name>
    <name type="ordered locus">DR_0386</name>
</gene>
<reference key="1">
    <citation type="journal article" date="1999" name="Science">
        <title>Genome sequence of the radioresistant bacterium Deinococcus radiodurans R1.</title>
        <authorList>
            <person name="White O."/>
            <person name="Eisen J.A."/>
            <person name="Heidelberg J.F."/>
            <person name="Hickey E.K."/>
            <person name="Peterson J.D."/>
            <person name="Dodson R.J."/>
            <person name="Haft D.H."/>
            <person name="Gwinn M.L."/>
            <person name="Nelson W.C."/>
            <person name="Richardson D.L."/>
            <person name="Moffat K.S."/>
            <person name="Qin H."/>
            <person name="Jiang L."/>
            <person name="Pamphile W."/>
            <person name="Crosby M."/>
            <person name="Shen M."/>
            <person name="Vamathevan J.J."/>
            <person name="Lam P."/>
            <person name="McDonald L.A."/>
            <person name="Utterback T.R."/>
            <person name="Zalewski C."/>
            <person name="Makarova K.S."/>
            <person name="Aravind L."/>
            <person name="Daly M.J."/>
            <person name="Minton K.W."/>
            <person name="Fleischmann R.D."/>
            <person name="Ketchum K.A."/>
            <person name="Nelson K.E."/>
            <person name="Salzberg S.L."/>
            <person name="Smith H.O."/>
            <person name="Venter J.C."/>
            <person name="Fraser C.M."/>
        </authorList>
    </citation>
    <scope>NUCLEOTIDE SEQUENCE [LARGE SCALE GENOMIC DNA]</scope>
    <source>
        <strain>ATCC 13939 / DSM 20539 / JCM 16871 / CCUG 27074 / LMG 4051 / NBRC 15346 / NCIMB 9279 / VKM B-1422 / R1</strain>
    </source>
</reference>
<protein>
    <recommendedName>
        <fullName evidence="1">4-hydroxy-3-methylbut-2-en-1-yl diphosphate synthase (flavodoxin)</fullName>
        <ecNumber evidence="1">1.17.7.3</ecNumber>
    </recommendedName>
    <alternativeName>
        <fullName evidence="1">1-hydroxy-2-methyl-2-(E)-butenyl 4-diphosphate synthase</fullName>
    </alternativeName>
</protein>
<sequence length="429" mass="46130">MSFDSLPALPLDPLPDAALPTAPRRRQTVSVNVGGVMVGSAHPIVVQSMTNTDTANAEATAIQVAQLARAGSEIVRVTVNTREAAAAVPELVQRLADIGVHVPIVGDFHYNGHLLLREYPETARLLAKYRINPGNVGAGQRHDENFATMIEVAKEFDKPVRIGVNWGSLDQQVLARLMDENAAAGHPKSPTDVTIDAMIVSALDSARFAEELGLGHDKILISVKVSSAPELWQVYRQLAPLCDYPLHLGLTEAGMGMKGIVASSVALAPLLTEGIGDTIRVSLTPEPGAPRKLEVEVAQQILQSLGLRQFLPQVTSCPGCGRTTSSFFQTLAQKIQDFIRESMPEWKAKYPGVEDMQVAVMGCVVNGPGESKHANIGISLPGTGEDPRAPVYQDGKLLTTLKGPRIAEEFQELLEKYVEERYGQGVAQG</sequence>
<dbReference type="EC" id="1.17.7.3" evidence="1"/>
<dbReference type="EMBL" id="AE000513">
    <property type="protein sequence ID" value="AAF09963.1"/>
    <property type="molecule type" value="Genomic_DNA"/>
</dbReference>
<dbReference type="PIR" id="D75526">
    <property type="entry name" value="D75526"/>
</dbReference>
<dbReference type="RefSeq" id="NP_294109.1">
    <property type="nucleotide sequence ID" value="NC_001263.1"/>
</dbReference>
<dbReference type="RefSeq" id="WP_010887031.1">
    <property type="nucleotide sequence ID" value="NC_001263.1"/>
</dbReference>
<dbReference type="SMR" id="Q9RXC9"/>
<dbReference type="FunCoup" id="Q9RXC9">
    <property type="interactions" value="209"/>
</dbReference>
<dbReference type="STRING" id="243230.DR_0386"/>
<dbReference type="PaxDb" id="243230-DR_0386"/>
<dbReference type="EnsemblBacteria" id="AAF09963">
    <property type="protein sequence ID" value="AAF09963"/>
    <property type="gene ID" value="DR_0386"/>
</dbReference>
<dbReference type="GeneID" id="69516618"/>
<dbReference type="KEGG" id="dra:DR_0386"/>
<dbReference type="PATRIC" id="fig|243230.17.peg.560"/>
<dbReference type="eggNOG" id="COG0821">
    <property type="taxonomic scope" value="Bacteria"/>
</dbReference>
<dbReference type="HOGENOM" id="CLU_042258_1_0_0"/>
<dbReference type="InParanoid" id="Q9RXC9"/>
<dbReference type="OrthoDB" id="9803214at2"/>
<dbReference type="UniPathway" id="UPA00056">
    <property type="reaction ID" value="UER00096"/>
</dbReference>
<dbReference type="Proteomes" id="UP000002524">
    <property type="component" value="Chromosome 1"/>
</dbReference>
<dbReference type="GO" id="GO:0051539">
    <property type="term" value="F:4 iron, 4 sulfur cluster binding"/>
    <property type="evidence" value="ECO:0007669"/>
    <property type="project" value="UniProtKB-UniRule"/>
</dbReference>
<dbReference type="GO" id="GO:0046429">
    <property type="term" value="F:4-hydroxy-3-methylbut-2-en-1-yl diphosphate synthase activity (ferredoxin)"/>
    <property type="evidence" value="ECO:0000318"/>
    <property type="project" value="GO_Central"/>
</dbReference>
<dbReference type="GO" id="GO:0141197">
    <property type="term" value="F:4-hydroxy-3-methylbut-2-enyl-diphosphate synthase activity (flavodoxin)"/>
    <property type="evidence" value="ECO:0007669"/>
    <property type="project" value="UniProtKB-EC"/>
</dbReference>
<dbReference type="GO" id="GO:0005506">
    <property type="term" value="F:iron ion binding"/>
    <property type="evidence" value="ECO:0007669"/>
    <property type="project" value="InterPro"/>
</dbReference>
<dbReference type="GO" id="GO:0019288">
    <property type="term" value="P:isopentenyl diphosphate biosynthetic process, methylerythritol 4-phosphate pathway"/>
    <property type="evidence" value="ECO:0000318"/>
    <property type="project" value="GO_Central"/>
</dbReference>
<dbReference type="GO" id="GO:0016114">
    <property type="term" value="P:terpenoid biosynthetic process"/>
    <property type="evidence" value="ECO:0007669"/>
    <property type="project" value="InterPro"/>
</dbReference>
<dbReference type="FunFam" id="3.30.413.10:FF:000012">
    <property type="entry name" value="4-hydroxy-3-methylbut-2-en-1-yl diphosphate synthase (flavodoxin)"/>
    <property type="match status" value="1"/>
</dbReference>
<dbReference type="Gene3D" id="3.20.20.20">
    <property type="entry name" value="Dihydropteroate synthase-like"/>
    <property type="match status" value="1"/>
</dbReference>
<dbReference type="Gene3D" id="3.30.413.10">
    <property type="entry name" value="Sulfite Reductase Hemoprotein, domain 1"/>
    <property type="match status" value="1"/>
</dbReference>
<dbReference type="HAMAP" id="MF_00159">
    <property type="entry name" value="IspG"/>
    <property type="match status" value="1"/>
</dbReference>
<dbReference type="InterPro" id="IPR011005">
    <property type="entry name" value="Dihydropteroate_synth-like_sf"/>
</dbReference>
<dbReference type="InterPro" id="IPR016425">
    <property type="entry name" value="IspG_bac"/>
</dbReference>
<dbReference type="InterPro" id="IPR004588">
    <property type="entry name" value="IspG_bac-typ"/>
</dbReference>
<dbReference type="InterPro" id="IPR045854">
    <property type="entry name" value="NO2/SO3_Rdtase_4Fe4S_sf"/>
</dbReference>
<dbReference type="NCBIfam" id="TIGR00612">
    <property type="entry name" value="ispG_gcpE"/>
    <property type="match status" value="1"/>
</dbReference>
<dbReference type="NCBIfam" id="NF001540">
    <property type="entry name" value="PRK00366.1"/>
    <property type="match status" value="1"/>
</dbReference>
<dbReference type="PANTHER" id="PTHR30454">
    <property type="entry name" value="4-HYDROXY-3-METHYLBUT-2-EN-1-YL DIPHOSPHATE SYNTHASE"/>
    <property type="match status" value="1"/>
</dbReference>
<dbReference type="PANTHER" id="PTHR30454:SF0">
    <property type="entry name" value="4-HYDROXY-3-METHYLBUT-2-EN-1-YL DIPHOSPHATE SYNTHASE (FERREDOXIN), CHLOROPLASTIC"/>
    <property type="match status" value="1"/>
</dbReference>
<dbReference type="Pfam" id="PF04551">
    <property type="entry name" value="GcpE"/>
    <property type="match status" value="1"/>
</dbReference>
<dbReference type="PIRSF" id="PIRSF004640">
    <property type="entry name" value="IspG"/>
    <property type="match status" value="1"/>
</dbReference>
<comment type="function">
    <text evidence="1">Converts 2C-methyl-D-erythritol 2,4-cyclodiphosphate (ME-2,4cPP) into 1-hydroxy-2-methyl-2-(E)-butenyl 4-diphosphate.</text>
</comment>
<comment type="catalytic activity">
    <reaction evidence="1">
        <text>(2E)-4-hydroxy-3-methylbut-2-enyl diphosphate + oxidized [flavodoxin] + H2O + 2 H(+) = 2-C-methyl-D-erythritol 2,4-cyclic diphosphate + reduced [flavodoxin]</text>
        <dbReference type="Rhea" id="RHEA:43604"/>
        <dbReference type="Rhea" id="RHEA-COMP:10622"/>
        <dbReference type="Rhea" id="RHEA-COMP:10623"/>
        <dbReference type="ChEBI" id="CHEBI:15377"/>
        <dbReference type="ChEBI" id="CHEBI:15378"/>
        <dbReference type="ChEBI" id="CHEBI:57618"/>
        <dbReference type="ChEBI" id="CHEBI:58210"/>
        <dbReference type="ChEBI" id="CHEBI:58483"/>
        <dbReference type="ChEBI" id="CHEBI:128753"/>
        <dbReference type="EC" id="1.17.7.3"/>
    </reaction>
</comment>
<comment type="cofactor">
    <cofactor evidence="1">
        <name>[4Fe-4S] cluster</name>
        <dbReference type="ChEBI" id="CHEBI:49883"/>
    </cofactor>
    <text evidence="1">Binds 1 [4Fe-4S] cluster.</text>
</comment>
<comment type="pathway">
    <text evidence="1">Isoprenoid biosynthesis; isopentenyl diphosphate biosynthesis via DXP pathway; isopentenyl diphosphate from 1-deoxy-D-xylulose 5-phosphate: step 5/6.</text>
</comment>
<comment type="similarity">
    <text evidence="1">Belongs to the IspG family.</text>
</comment>
<keyword id="KW-0004">4Fe-4S</keyword>
<keyword id="KW-0408">Iron</keyword>
<keyword id="KW-0411">Iron-sulfur</keyword>
<keyword id="KW-0414">Isoprene biosynthesis</keyword>
<keyword id="KW-0479">Metal-binding</keyword>
<keyword id="KW-0560">Oxidoreductase</keyword>
<keyword id="KW-1185">Reference proteome</keyword>
<evidence type="ECO:0000255" key="1">
    <source>
        <dbReference type="HAMAP-Rule" id="MF_00159"/>
    </source>
</evidence>
<accession>Q9RXC9</accession>
<organism>
    <name type="scientific">Deinococcus radiodurans (strain ATCC 13939 / DSM 20539 / JCM 16871 / CCUG 27074 / LMG 4051 / NBRC 15346 / NCIMB 9279 / VKM B-1422 / R1)</name>
    <dbReference type="NCBI Taxonomy" id="243230"/>
    <lineage>
        <taxon>Bacteria</taxon>
        <taxon>Thermotogati</taxon>
        <taxon>Deinococcota</taxon>
        <taxon>Deinococci</taxon>
        <taxon>Deinococcales</taxon>
        <taxon>Deinococcaceae</taxon>
        <taxon>Deinococcus</taxon>
    </lineage>
</organism>